<reference key="1">
    <citation type="journal article" date="2003" name="Nat. Genet.">
        <title>Comparative analysis of the genome sequences of Bordetella pertussis, Bordetella parapertussis and Bordetella bronchiseptica.</title>
        <authorList>
            <person name="Parkhill J."/>
            <person name="Sebaihia M."/>
            <person name="Preston A."/>
            <person name="Murphy L.D."/>
            <person name="Thomson N.R."/>
            <person name="Harris D.E."/>
            <person name="Holden M.T.G."/>
            <person name="Churcher C.M."/>
            <person name="Bentley S.D."/>
            <person name="Mungall K.L."/>
            <person name="Cerdeno-Tarraga A.-M."/>
            <person name="Temple L."/>
            <person name="James K.D."/>
            <person name="Harris B."/>
            <person name="Quail M.A."/>
            <person name="Achtman M."/>
            <person name="Atkin R."/>
            <person name="Baker S."/>
            <person name="Basham D."/>
            <person name="Bason N."/>
            <person name="Cherevach I."/>
            <person name="Chillingworth T."/>
            <person name="Collins M."/>
            <person name="Cronin A."/>
            <person name="Davis P."/>
            <person name="Doggett J."/>
            <person name="Feltwell T."/>
            <person name="Goble A."/>
            <person name="Hamlin N."/>
            <person name="Hauser H."/>
            <person name="Holroyd S."/>
            <person name="Jagels K."/>
            <person name="Leather S."/>
            <person name="Moule S."/>
            <person name="Norberczak H."/>
            <person name="O'Neil S."/>
            <person name="Ormond D."/>
            <person name="Price C."/>
            <person name="Rabbinowitsch E."/>
            <person name="Rutter S."/>
            <person name="Sanders M."/>
            <person name="Saunders D."/>
            <person name="Seeger K."/>
            <person name="Sharp S."/>
            <person name="Simmonds M."/>
            <person name="Skelton J."/>
            <person name="Squares R."/>
            <person name="Squares S."/>
            <person name="Stevens K."/>
            <person name="Unwin L."/>
            <person name="Whitehead S."/>
            <person name="Barrell B.G."/>
            <person name="Maskell D.J."/>
        </authorList>
    </citation>
    <scope>NUCLEOTIDE SEQUENCE [LARGE SCALE GENOMIC DNA]</scope>
    <source>
        <strain>12822 / ATCC BAA-587 / NCTC 13253</strain>
    </source>
</reference>
<dbReference type="EMBL" id="BX640436">
    <property type="protein sequence ID" value="CAE39684.1"/>
    <property type="status" value="ALT_INIT"/>
    <property type="molecule type" value="Genomic_DNA"/>
</dbReference>
<dbReference type="RefSeq" id="WP_010929555.1">
    <property type="nucleotide sequence ID" value="NC_002928.3"/>
</dbReference>
<dbReference type="SMR" id="Q7W2K1"/>
<dbReference type="DNASU" id="1666638"/>
<dbReference type="GeneID" id="93206205"/>
<dbReference type="KEGG" id="bpa:BPP4405"/>
<dbReference type="HOGENOM" id="CLU_016535_3_0_4"/>
<dbReference type="Proteomes" id="UP000001421">
    <property type="component" value="Chromosome"/>
</dbReference>
<dbReference type="GO" id="GO:0005886">
    <property type="term" value="C:plasma membrane"/>
    <property type="evidence" value="ECO:0007669"/>
    <property type="project" value="UniProtKB-SubCell"/>
</dbReference>
<dbReference type="GO" id="GO:0032977">
    <property type="term" value="F:membrane insertase activity"/>
    <property type="evidence" value="ECO:0007669"/>
    <property type="project" value="InterPro"/>
</dbReference>
<dbReference type="GO" id="GO:0051205">
    <property type="term" value="P:protein insertion into membrane"/>
    <property type="evidence" value="ECO:0007669"/>
    <property type="project" value="TreeGrafter"/>
</dbReference>
<dbReference type="GO" id="GO:0015031">
    <property type="term" value="P:protein transport"/>
    <property type="evidence" value="ECO:0007669"/>
    <property type="project" value="UniProtKB-KW"/>
</dbReference>
<dbReference type="CDD" id="cd20070">
    <property type="entry name" value="5TM_YidC_Alb3"/>
    <property type="match status" value="1"/>
</dbReference>
<dbReference type="CDD" id="cd19961">
    <property type="entry name" value="EcYidC-like_peri"/>
    <property type="match status" value="1"/>
</dbReference>
<dbReference type="Gene3D" id="2.70.98.90">
    <property type="match status" value="1"/>
</dbReference>
<dbReference type="HAMAP" id="MF_01810">
    <property type="entry name" value="YidC_type1"/>
    <property type="match status" value="1"/>
</dbReference>
<dbReference type="InterPro" id="IPR019998">
    <property type="entry name" value="Membr_insert_YidC"/>
</dbReference>
<dbReference type="InterPro" id="IPR028053">
    <property type="entry name" value="Membr_insert_YidC_N"/>
</dbReference>
<dbReference type="InterPro" id="IPR001708">
    <property type="entry name" value="YidC/ALB3/OXA1/COX18"/>
</dbReference>
<dbReference type="InterPro" id="IPR028055">
    <property type="entry name" value="YidC/Oxa/ALB_C"/>
</dbReference>
<dbReference type="InterPro" id="IPR047196">
    <property type="entry name" value="YidC_ALB_C"/>
</dbReference>
<dbReference type="InterPro" id="IPR038221">
    <property type="entry name" value="YidC_periplasmic_sf"/>
</dbReference>
<dbReference type="NCBIfam" id="NF002352">
    <property type="entry name" value="PRK01318.1-3"/>
    <property type="match status" value="1"/>
</dbReference>
<dbReference type="NCBIfam" id="TIGR03593">
    <property type="entry name" value="yidC_nterm"/>
    <property type="match status" value="1"/>
</dbReference>
<dbReference type="NCBIfam" id="TIGR03592">
    <property type="entry name" value="yidC_oxa1_cterm"/>
    <property type="match status" value="1"/>
</dbReference>
<dbReference type="PANTHER" id="PTHR12428:SF65">
    <property type="entry name" value="CYTOCHROME C OXIDASE ASSEMBLY PROTEIN COX18, MITOCHONDRIAL"/>
    <property type="match status" value="1"/>
</dbReference>
<dbReference type="PANTHER" id="PTHR12428">
    <property type="entry name" value="OXA1"/>
    <property type="match status" value="1"/>
</dbReference>
<dbReference type="Pfam" id="PF02096">
    <property type="entry name" value="60KD_IMP"/>
    <property type="match status" value="1"/>
</dbReference>
<dbReference type="Pfam" id="PF14849">
    <property type="entry name" value="YidC_periplas"/>
    <property type="match status" value="1"/>
</dbReference>
<dbReference type="PRINTS" id="PR00701">
    <property type="entry name" value="60KDINNERMP"/>
</dbReference>
<dbReference type="PRINTS" id="PR01900">
    <property type="entry name" value="YIDCPROTEIN"/>
</dbReference>
<sequence>MDIRRTVLWMIFSFSLLLLWNNWQIHNGKPSLFGGPAPEAAATQQPKADANGTAASSTASIPSSPAAAPAAASVPGAAAPAAAKSEQVVITTDVLRLTFDSNGAQLIRAELLKYPSSSQSDKPTVLMDRSADLVYVAQTGVVGAPQGESFPTHQTPFHLVSSERSLTGDTLDVVFEAESGGLKVTKTYTLHRGRYDVDVRHAMANTGGAPLSPALYLQLERDGTDPAGTSSFYHTFTGVAVYSEQDKFQKVTFSDIEKKKGTYIKQADNGWIGIVQHYFATAWIPAQGKQRTNELLQVQQNLYAARTIEAVGTIAPGSSANVDAHLWVGPQDQKAMAAVAPGLELVVDYGWLTIIAKPLFTLMTWLHGLLGNWGWTIVALTVIIKAVFFPLAAASYRSMARMKQVAPRLQALKEKYGDDRQKLNQAMMEMYRTEKINPLGGCLPMVVQIPVFIALYWVLLASVEMRGAPWILWVHDLSVRDPFFILPAIMMATMFLQIKLNPTPPDPVQAKVMMIMPLVFGGMMFFFPAGLVLYWCVNNTLSIAQQWTITRNLERQAAAAANR</sequence>
<gene>
    <name evidence="1" type="primary">yidC</name>
    <name type="ordered locus">BPP4405</name>
</gene>
<proteinExistence type="inferred from homology"/>
<comment type="function">
    <text evidence="1">Required for the insertion and/or proper folding and/or complex formation of integral membrane proteins into the membrane. Involved in integration of membrane proteins that insert both dependently and independently of the Sec translocase complex, as well as at least some lipoproteins. Aids folding of multispanning membrane proteins.</text>
</comment>
<comment type="subunit">
    <text evidence="1">Interacts with the Sec translocase complex via SecD. Specifically interacts with transmembrane segments of nascent integral membrane proteins during membrane integration.</text>
</comment>
<comment type="subcellular location">
    <subcellularLocation>
        <location evidence="1">Cell inner membrane</location>
        <topology evidence="1">Multi-pass membrane protein</topology>
    </subcellularLocation>
</comment>
<comment type="similarity">
    <text evidence="1">Belongs to the OXA1/ALB3/YidC family. Type 1 subfamily.</text>
</comment>
<comment type="sequence caution" evidence="3">
    <conflict type="erroneous initiation">
        <sequence resource="EMBL-CDS" id="CAE39684"/>
    </conflict>
    <text>Truncated N-terminus.</text>
</comment>
<feature type="chain" id="PRO_0000124690" description="Membrane protein insertase YidC">
    <location>
        <begin position="1"/>
        <end position="563"/>
    </location>
</feature>
<feature type="transmembrane region" description="Helical" evidence="1">
    <location>
        <begin position="6"/>
        <end position="26"/>
    </location>
</feature>
<feature type="transmembrane region" description="Helical" evidence="1">
    <location>
        <begin position="373"/>
        <end position="393"/>
    </location>
</feature>
<feature type="transmembrane region" description="Helical" evidence="1">
    <location>
        <begin position="443"/>
        <end position="463"/>
    </location>
</feature>
<feature type="transmembrane region" description="Helical" evidence="1">
    <location>
        <begin position="482"/>
        <end position="502"/>
    </location>
</feature>
<feature type="transmembrane region" description="Helical" evidence="1">
    <location>
        <begin position="512"/>
        <end position="532"/>
    </location>
</feature>
<feature type="region of interest" description="Disordered" evidence="2">
    <location>
        <begin position="36"/>
        <end position="70"/>
    </location>
</feature>
<feature type="compositionally biased region" description="Low complexity" evidence="2">
    <location>
        <begin position="54"/>
        <end position="70"/>
    </location>
</feature>
<name>YIDC_BORPA</name>
<keyword id="KW-0997">Cell inner membrane</keyword>
<keyword id="KW-1003">Cell membrane</keyword>
<keyword id="KW-0143">Chaperone</keyword>
<keyword id="KW-0472">Membrane</keyword>
<keyword id="KW-0653">Protein transport</keyword>
<keyword id="KW-0812">Transmembrane</keyword>
<keyword id="KW-1133">Transmembrane helix</keyword>
<keyword id="KW-0813">Transport</keyword>
<protein>
    <recommendedName>
        <fullName evidence="1">Membrane protein insertase YidC</fullName>
    </recommendedName>
    <alternativeName>
        <fullName evidence="1">Foldase YidC</fullName>
    </alternativeName>
    <alternativeName>
        <fullName evidence="1">Membrane integrase YidC</fullName>
    </alternativeName>
    <alternativeName>
        <fullName evidence="1">Membrane protein YidC</fullName>
    </alternativeName>
</protein>
<accession>Q7W2K1</accession>
<organism>
    <name type="scientific">Bordetella parapertussis (strain 12822 / ATCC BAA-587 / NCTC 13253)</name>
    <dbReference type="NCBI Taxonomy" id="257311"/>
    <lineage>
        <taxon>Bacteria</taxon>
        <taxon>Pseudomonadati</taxon>
        <taxon>Pseudomonadota</taxon>
        <taxon>Betaproteobacteria</taxon>
        <taxon>Burkholderiales</taxon>
        <taxon>Alcaligenaceae</taxon>
        <taxon>Bordetella</taxon>
    </lineage>
</organism>
<evidence type="ECO:0000255" key="1">
    <source>
        <dbReference type="HAMAP-Rule" id="MF_01810"/>
    </source>
</evidence>
<evidence type="ECO:0000256" key="2">
    <source>
        <dbReference type="SAM" id="MobiDB-lite"/>
    </source>
</evidence>
<evidence type="ECO:0000305" key="3"/>